<name>POLA_CHPVU</name>
<dbReference type="EC" id="3.4.22.-" evidence="3"/>
<dbReference type="EMBL" id="AF082191">
    <property type="protein sequence ID" value="AAD13749.1"/>
    <property type="molecule type" value="Genomic_RNA"/>
</dbReference>
<dbReference type="Proteomes" id="UP000008451">
    <property type="component" value="Genome"/>
</dbReference>
<dbReference type="GO" id="GO:0004197">
    <property type="term" value="F:cysteine-type endopeptidase activity"/>
    <property type="evidence" value="ECO:0007669"/>
    <property type="project" value="InterPro"/>
</dbReference>
<dbReference type="GO" id="GO:0006508">
    <property type="term" value="P:proteolysis"/>
    <property type="evidence" value="ECO:0007669"/>
    <property type="project" value="UniProtKB-KW"/>
</dbReference>
<dbReference type="GO" id="GO:0052170">
    <property type="term" value="P:symbiont-mediated suppression of host innate immune response"/>
    <property type="evidence" value="ECO:0007669"/>
    <property type="project" value="UniProtKB-KW"/>
</dbReference>
<dbReference type="InterPro" id="IPR002704">
    <property type="entry name" value="Peptidase_C7_dom"/>
</dbReference>
<dbReference type="Pfam" id="PF01830">
    <property type="entry name" value="Peptidase_C7"/>
    <property type="match status" value="1"/>
</dbReference>
<dbReference type="PROSITE" id="PS51877">
    <property type="entry name" value="HAV_P29_PRO"/>
    <property type="match status" value="1"/>
</dbReference>
<feature type="chain" id="PRO_0000038879" description="Papain-like protease p29" evidence="1">
    <location>
        <begin position="1"/>
        <end position="248"/>
    </location>
</feature>
<feature type="chain" id="PRO_0000038880" description="p40 protein" evidence="1">
    <location>
        <begin position="249"/>
        <end position="622"/>
    </location>
</feature>
<feature type="domain" description="Peptidase C7" evidence="3">
    <location>
        <begin position="1"/>
        <end position="248"/>
    </location>
</feature>
<feature type="active site" description="For papain-like protease p29 activity" evidence="3">
    <location>
        <position position="162"/>
    </location>
</feature>
<feature type="active site" description="For papain-like protease p29 activity" evidence="3">
    <location>
        <position position="215"/>
    </location>
</feature>
<feature type="site" description="Cleavage; by papain-like protease p29" evidence="3">
    <location>
        <begin position="248"/>
        <end position="249"/>
    </location>
</feature>
<sequence length="622" mass="69993">MSCLRKPSQSLVLSESVDPTTVDPFVDVRAEEVVPTGCMTLWEYRDSCGDVPGPLSHGDLRRLRTPDGVCKCQIHFEFPTVLKSGSTGTVPEHPAVVAAFMGRPRRCSLEQRTKELDFRFLQLVHEGLPVRPSYMIARPPRPVRGLCSSRDGSLAQFGQGYCYLSAIVDSARWRVARTTGWCVRVADYLRLLQWVGRRSFGSFQIEESTVEHVYHVIVDTEHQSEQDGALFYQAVSDLAARDPLARIGNQLNPLAAEFCPRSARRVEPVTPQVTRRKGLARMPGRSPTVVSVGNVGMAITSIQDALVATELRNVNFGRRDTEAECRRLWARYEVNDYFRRHKAELLKFDARLRSHMAKKPVSVRTRSSDAKIQCIGWRDRHLLPQRLAGLTKQKRSLIWSRFATSNIRRKASACTMTPSVDPMVHTWGDSAALAAKKISEARRRQEICAAAYAERAKARGQTNVVASISEAIETTLRRNGTRFALDGLHVAASVIVTTRLRSWNQEEVLAGREFRKSTTSWIWRHMPSSIQDALNLTSVRDKLDPGRAFGYVQAAVAQGMSDFRRAKRSLAIVAKPVIRNVRDPYDHGFVKRDGKLRHSRDVSNKKLRTKAVAATKVHKIIF</sequence>
<accession>Q9YTU3</accession>
<keyword id="KW-0945">Host-virus interaction</keyword>
<keyword id="KW-0378">Hydrolase</keyword>
<keyword id="KW-1090">Inhibition of host innate immune response by virus</keyword>
<keyword id="KW-0645">Protease</keyword>
<keyword id="KW-0941">Suppressor of RNA silencing</keyword>
<keyword id="KW-0788">Thiol protease</keyword>
<keyword id="KW-0899">Viral immunoevasion</keyword>
<proteinExistence type="inferred from homology"/>
<evidence type="ECO:0000250" key="1"/>
<evidence type="ECO:0000250" key="2">
    <source>
        <dbReference type="UniProtKB" id="P10941"/>
    </source>
</evidence>
<evidence type="ECO:0000255" key="3">
    <source>
        <dbReference type="PROSITE-ProRule" id="PRU01225"/>
    </source>
</evidence>
<protein>
    <recommendedName>
        <fullName>Polyprotein p69</fullName>
    </recommendedName>
    <alternativeName>
        <fullName>ORFA polyprotein</fullName>
    </alternativeName>
    <component>
        <recommendedName>
            <fullName evidence="3">Papain-like protease p29</fullName>
            <ecNumber evidence="3">3.4.22.-</ecNumber>
        </recommendedName>
    </component>
    <component>
        <recommendedName>
            <fullName>p40 protein</fullName>
        </recommendedName>
    </component>
</protein>
<organism>
    <name type="scientific">Cryphonectria hypovirus 1 (strain Euro7)</name>
    <name type="common">CHV-1/Euro7</name>
    <name type="synonym">Chestnut blight fungus hypovirulence-associated virus</name>
    <dbReference type="NCBI Taxonomy" id="321609"/>
    <lineage>
        <taxon>Viruses</taxon>
        <taxon>Riboviria</taxon>
        <taxon>Orthornavirae</taxon>
        <taxon>Pisuviricota</taxon>
        <taxon>Duplopiviricetes</taxon>
        <taxon>Durnavirales</taxon>
        <taxon>Hypoviridae</taxon>
        <taxon>Alphahypovirus</taxon>
        <taxon>Alphahypovirus cryphonectriae</taxon>
    </lineage>
</organism>
<organismHost>
    <name type="scientific">Cryphonectria parasitica</name>
    <name type="common">Chestnut blight fungus</name>
    <name type="synonym">Endothia parasitica</name>
    <dbReference type="NCBI Taxonomy" id="5116"/>
</organismHost>
<reference key="1">
    <citation type="journal article" date="1999" name="J. Virol.">
        <title>Infectious cDNA clone of hypovirus CHV1-Euro7: a comparative virology approach to investigate virus-mediated hypovirulence of the chestnut blight fungus Cryphonectria parasitica.</title>
        <authorList>
            <person name="Chen B."/>
            <person name="Nuss D.L."/>
        </authorList>
    </citation>
    <scope>NUCLEOTIDE SEQUENCE [GENOMIC RNA]</scope>
</reference>
<comment type="function">
    <text evidence="1">P40 protein is involved in reduction of conidiation of the host. Not necessary for replication. Also involved in reduction of orange pigmentation of the host (By similarity).</text>
</comment>
<comment type="function">
    <molecule>Papain-like protease p29</molecule>
    <text evidence="3">Cysteine protease of the peptidase family C7 that contributes to hypovirulence-associated traits like the reduction in conidiation and laccase activity, but not to virulence attenuation. Acts as a suppressor of RNA-mediated gene silencing, also known as post-transcriptional gene silencing (PTGS), a mechanism of viral defense that limits the accumulation of viral RNAs. Enhances viral dsRNA accumulation and virus transmission. Also involved in the reduction in orange pigmentation of the host, an effect independent of the intrinsic protease activity.</text>
</comment>
<comment type="PTM">
    <molecule>Papain-like protease p29</molecule>
    <text evidence="2">Autocatalytically processed.</text>
</comment>
<comment type="miscellaneous">
    <text>Hypoviruses induce hypovirulence in their fungal host Cryphonectria parasitica. The consequence is attenuation of the related fungal disease, chestnut blight, that causes cankers that enlarge and kill branches and trunks. The virus-like genetic elements consist of cytoplasmically replicating double-stranded RNA.</text>
</comment>
<comment type="miscellaneous">
    <text>CHV-1 strain Euro7 is a mild hypovirulent strain.</text>
</comment>